<keyword id="KW-1185">Reference proteome</keyword>
<keyword id="KW-0687">Ribonucleoprotein</keyword>
<keyword id="KW-0689">Ribosomal protein</keyword>
<keyword id="KW-0694">RNA-binding</keyword>
<keyword id="KW-0699">rRNA-binding</keyword>
<feature type="chain" id="PRO_1000086810" description="Small ribosomal subunit protein uS15">
    <location>
        <begin position="1"/>
        <end position="89"/>
    </location>
</feature>
<organism>
    <name type="scientific">Polynucleobacter asymbioticus (strain DSM 18221 / CIP 109841 / QLW-P1DMWA-1)</name>
    <name type="common">Polynucleobacter necessarius subsp. asymbioticus</name>
    <dbReference type="NCBI Taxonomy" id="312153"/>
    <lineage>
        <taxon>Bacteria</taxon>
        <taxon>Pseudomonadati</taxon>
        <taxon>Pseudomonadota</taxon>
        <taxon>Betaproteobacteria</taxon>
        <taxon>Burkholderiales</taxon>
        <taxon>Burkholderiaceae</taxon>
        <taxon>Polynucleobacter</taxon>
    </lineage>
</organism>
<evidence type="ECO:0000255" key="1">
    <source>
        <dbReference type="HAMAP-Rule" id="MF_01343"/>
    </source>
</evidence>
<evidence type="ECO:0000305" key="2"/>
<dbReference type="EMBL" id="CP000655">
    <property type="protein sequence ID" value="ABP34272.1"/>
    <property type="molecule type" value="Genomic_DNA"/>
</dbReference>
<dbReference type="RefSeq" id="WP_011902897.1">
    <property type="nucleotide sequence ID" value="NC_009379.1"/>
</dbReference>
<dbReference type="SMR" id="A4SXQ8"/>
<dbReference type="GeneID" id="83596927"/>
<dbReference type="KEGG" id="pnu:Pnuc_1056"/>
<dbReference type="eggNOG" id="COG0184">
    <property type="taxonomic scope" value="Bacteria"/>
</dbReference>
<dbReference type="HOGENOM" id="CLU_148518_0_0_4"/>
<dbReference type="Proteomes" id="UP000000231">
    <property type="component" value="Chromosome"/>
</dbReference>
<dbReference type="GO" id="GO:0022627">
    <property type="term" value="C:cytosolic small ribosomal subunit"/>
    <property type="evidence" value="ECO:0007669"/>
    <property type="project" value="TreeGrafter"/>
</dbReference>
<dbReference type="GO" id="GO:0019843">
    <property type="term" value="F:rRNA binding"/>
    <property type="evidence" value="ECO:0007669"/>
    <property type="project" value="UniProtKB-UniRule"/>
</dbReference>
<dbReference type="GO" id="GO:0003735">
    <property type="term" value="F:structural constituent of ribosome"/>
    <property type="evidence" value="ECO:0007669"/>
    <property type="project" value="InterPro"/>
</dbReference>
<dbReference type="GO" id="GO:0006412">
    <property type="term" value="P:translation"/>
    <property type="evidence" value="ECO:0007669"/>
    <property type="project" value="UniProtKB-UniRule"/>
</dbReference>
<dbReference type="CDD" id="cd00353">
    <property type="entry name" value="Ribosomal_S15p_S13e"/>
    <property type="match status" value="1"/>
</dbReference>
<dbReference type="FunFam" id="1.10.287.10:FF:000002">
    <property type="entry name" value="30S ribosomal protein S15"/>
    <property type="match status" value="1"/>
</dbReference>
<dbReference type="Gene3D" id="6.10.250.3130">
    <property type="match status" value="1"/>
</dbReference>
<dbReference type="Gene3D" id="1.10.287.10">
    <property type="entry name" value="S15/NS1, RNA-binding"/>
    <property type="match status" value="1"/>
</dbReference>
<dbReference type="HAMAP" id="MF_01343_B">
    <property type="entry name" value="Ribosomal_uS15_B"/>
    <property type="match status" value="1"/>
</dbReference>
<dbReference type="InterPro" id="IPR000589">
    <property type="entry name" value="Ribosomal_uS15"/>
</dbReference>
<dbReference type="InterPro" id="IPR005290">
    <property type="entry name" value="Ribosomal_uS15_bac-type"/>
</dbReference>
<dbReference type="InterPro" id="IPR009068">
    <property type="entry name" value="uS15_NS1_RNA-bd_sf"/>
</dbReference>
<dbReference type="NCBIfam" id="TIGR00952">
    <property type="entry name" value="S15_bact"/>
    <property type="match status" value="1"/>
</dbReference>
<dbReference type="PANTHER" id="PTHR23321">
    <property type="entry name" value="RIBOSOMAL PROTEIN S15, BACTERIAL AND ORGANELLAR"/>
    <property type="match status" value="1"/>
</dbReference>
<dbReference type="PANTHER" id="PTHR23321:SF26">
    <property type="entry name" value="SMALL RIBOSOMAL SUBUNIT PROTEIN US15M"/>
    <property type="match status" value="1"/>
</dbReference>
<dbReference type="Pfam" id="PF00312">
    <property type="entry name" value="Ribosomal_S15"/>
    <property type="match status" value="1"/>
</dbReference>
<dbReference type="SMART" id="SM01387">
    <property type="entry name" value="Ribosomal_S15"/>
    <property type="match status" value="1"/>
</dbReference>
<dbReference type="SUPFAM" id="SSF47060">
    <property type="entry name" value="S15/NS1 RNA-binding domain"/>
    <property type="match status" value="1"/>
</dbReference>
<dbReference type="PROSITE" id="PS00362">
    <property type="entry name" value="RIBOSOMAL_S15"/>
    <property type="match status" value="1"/>
</dbReference>
<accession>A4SXQ8</accession>
<gene>
    <name evidence="1" type="primary">rpsO</name>
    <name type="ordered locus">Pnuc_1056</name>
</gene>
<name>RS15_POLAQ</name>
<reference key="1">
    <citation type="journal article" date="2012" name="Stand. Genomic Sci.">
        <title>Complete genome sequence of Polynucleobacter necessarius subsp. asymbioticus type strain (QLW-P1DMWA-1(T)).</title>
        <authorList>
            <person name="Meincke L."/>
            <person name="Copeland A."/>
            <person name="Lapidus A."/>
            <person name="Lucas S."/>
            <person name="Berry K.W."/>
            <person name="Del Rio T.G."/>
            <person name="Hammon N."/>
            <person name="Dalin E."/>
            <person name="Tice H."/>
            <person name="Pitluck S."/>
            <person name="Richardson P."/>
            <person name="Bruce D."/>
            <person name="Goodwin L."/>
            <person name="Han C."/>
            <person name="Tapia R."/>
            <person name="Detter J.C."/>
            <person name="Schmutz J."/>
            <person name="Brettin T."/>
            <person name="Larimer F."/>
            <person name="Land M."/>
            <person name="Hauser L."/>
            <person name="Kyrpides N.C."/>
            <person name="Ivanova N."/>
            <person name="Goker M."/>
            <person name="Woyke T."/>
            <person name="Wu Q.L."/>
            <person name="Pockl M."/>
            <person name="Hahn M.W."/>
            <person name="Klenk H.P."/>
        </authorList>
    </citation>
    <scope>NUCLEOTIDE SEQUENCE [LARGE SCALE GENOMIC DNA]</scope>
    <source>
        <strain>DSM 18221 / CIP 109841 / QLW-P1DMWA-1</strain>
    </source>
</reference>
<proteinExistence type="inferred from homology"/>
<comment type="function">
    <text evidence="1">One of the primary rRNA binding proteins, it binds directly to 16S rRNA where it helps nucleate assembly of the platform of the 30S subunit by binding and bridging several RNA helices of the 16S rRNA.</text>
</comment>
<comment type="function">
    <text evidence="1">Forms an intersubunit bridge (bridge B4) with the 23S rRNA of the 50S subunit in the ribosome.</text>
</comment>
<comment type="subunit">
    <text evidence="1">Part of the 30S ribosomal subunit. Forms a bridge to the 50S subunit in the 70S ribosome, contacting the 23S rRNA.</text>
</comment>
<comment type="similarity">
    <text evidence="1">Belongs to the universal ribosomal protein uS15 family.</text>
</comment>
<sequence length="89" mass="10152">MAVADIKTAEIVKDNARSANDTGSPEVQVSLLTARINELTPHFKANAKDHHSRRGLLKMVSRRRRLLDYLKGKDLDRYRALIEKLGLRK</sequence>
<protein>
    <recommendedName>
        <fullName evidence="1">Small ribosomal subunit protein uS15</fullName>
    </recommendedName>
    <alternativeName>
        <fullName evidence="2">30S ribosomal protein S15</fullName>
    </alternativeName>
</protein>